<dbReference type="EC" id="3.1.-.-" evidence="1"/>
<dbReference type="EMBL" id="CR543861">
    <property type="protein sequence ID" value="CAG67302.1"/>
    <property type="molecule type" value="Genomic_DNA"/>
</dbReference>
<dbReference type="SMR" id="Q6FF55"/>
<dbReference type="STRING" id="202950.GCA_001485005_00614"/>
<dbReference type="GeneID" id="45232855"/>
<dbReference type="KEGG" id="aci:ACIAD0352"/>
<dbReference type="eggNOG" id="COG0816">
    <property type="taxonomic scope" value="Bacteria"/>
</dbReference>
<dbReference type="HOGENOM" id="CLU_098240_3_0_6"/>
<dbReference type="OrthoDB" id="9796140at2"/>
<dbReference type="BioCyc" id="ASP62977:ACIAD_RS01635-MONOMER"/>
<dbReference type="Proteomes" id="UP000000430">
    <property type="component" value="Chromosome"/>
</dbReference>
<dbReference type="GO" id="GO:0005829">
    <property type="term" value="C:cytosol"/>
    <property type="evidence" value="ECO:0007669"/>
    <property type="project" value="TreeGrafter"/>
</dbReference>
<dbReference type="GO" id="GO:0004518">
    <property type="term" value="F:nuclease activity"/>
    <property type="evidence" value="ECO:0007669"/>
    <property type="project" value="UniProtKB-KW"/>
</dbReference>
<dbReference type="GO" id="GO:0000967">
    <property type="term" value="P:rRNA 5'-end processing"/>
    <property type="evidence" value="ECO:0007669"/>
    <property type="project" value="UniProtKB-UniRule"/>
</dbReference>
<dbReference type="CDD" id="cd16964">
    <property type="entry name" value="YqgF"/>
    <property type="match status" value="1"/>
</dbReference>
<dbReference type="Gene3D" id="3.30.420.140">
    <property type="entry name" value="YqgF/RNase H-like domain"/>
    <property type="match status" value="1"/>
</dbReference>
<dbReference type="HAMAP" id="MF_00651">
    <property type="entry name" value="Nuclease_YqgF"/>
    <property type="match status" value="1"/>
</dbReference>
<dbReference type="InterPro" id="IPR012337">
    <property type="entry name" value="RNaseH-like_sf"/>
</dbReference>
<dbReference type="InterPro" id="IPR005227">
    <property type="entry name" value="YqgF"/>
</dbReference>
<dbReference type="InterPro" id="IPR006641">
    <property type="entry name" value="YqgF/RNaseH-like_dom"/>
</dbReference>
<dbReference type="InterPro" id="IPR037027">
    <property type="entry name" value="YqgF/RNaseH-like_dom_sf"/>
</dbReference>
<dbReference type="NCBIfam" id="TIGR00250">
    <property type="entry name" value="RNAse_H_YqgF"/>
    <property type="match status" value="1"/>
</dbReference>
<dbReference type="PANTHER" id="PTHR33317">
    <property type="entry name" value="POLYNUCLEOTIDYL TRANSFERASE, RIBONUCLEASE H-LIKE SUPERFAMILY PROTEIN"/>
    <property type="match status" value="1"/>
</dbReference>
<dbReference type="PANTHER" id="PTHR33317:SF4">
    <property type="entry name" value="POLYNUCLEOTIDYL TRANSFERASE, RIBONUCLEASE H-LIKE SUPERFAMILY PROTEIN"/>
    <property type="match status" value="1"/>
</dbReference>
<dbReference type="Pfam" id="PF03652">
    <property type="entry name" value="RuvX"/>
    <property type="match status" value="1"/>
</dbReference>
<dbReference type="SMART" id="SM00732">
    <property type="entry name" value="YqgFc"/>
    <property type="match status" value="1"/>
</dbReference>
<dbReference type="SUPFAM" id="SSF53098">
    <property type="entry name" value="Ribonuclease H-like"/>
    <property type="match status" value="1"/>
</dbReference>
<evidence type="ECO:0000255" key="1">
    <source>
        <dbReference type="HAMAP-Rule" id="MF_00651"/>
    </source>
</evidence>
<accession>Q6FF55</accession>
<sequence>MPDSMSHQMIMAFDFGTQKMGIAIGQAAIESSTPLALFPMKDGIPDWNQLLKIVKEWQPTLFLVGLPLNMDDSESELSARARKFARRLRHQTNITTWMVDERLTTREARDELESYQEQGRAKKIAADSIAASLLIQSWYRAPQGVQP</sequence>
<proteinExistence type="inferred from homology"/>
<gene>
    <name type="ordered locus">ACIAD0352</name>
</gene>
<comment type="function">
    <text evidence="1">Could be a nuclease involved in processing of the 5'-end of pre-16S rRNA.</text>
</comment>
<comment type="subcellular location">
    <subcellularLocation>
        <location evidence="1">Cytoplasm</location>
    </subcellularLocation>
</comment>
<comment type="similarity">
    <text evidence="1">Belongs to the YqgF nuclease family.</text>
</comment>
<organism>
    <name type="scientific">Acinetobacter baylyi (strain ATCC 33305 / BD413 / ADP1)</name>
    <dbReference type="NCBI Taxonomy" id="62977"/>
    <lineage>
        <taxon>Bacteria</taxon>
        <taxon>Pseudomonadati</taxon>
        <taxon>Pseudomonadota</taxon>
        <taxon>Gammaproteobacteria</taxon>
        <taxon>Moraxellales</taxon>
        <taxon>Moraxellaceae</taxon>
        <taxon>Acinetobacter</taxon>
    </lineage>
</organism>
<name>YQGF_ACIAD</name>
<reference key="1">
    <citation type="journal article" date="2004" name="Nucleic Acids Res.">
        <title>Unique features revealed by the genome sequence of Acinetobacter sp. ADP1, a versatile and naturally transformation competent bacterium.</title>
        <authorList>
            <person name="Barbe V."/>
            <person name="Vallenet D."/>
            <person name="Fonknechten N."/>
            <person name="Kreimeyer A."/>
            <person name="Oztas S."/>
            <person name="Labarre L."/>
            <person name="Cruveiller S."/>
            <person name="Robert C."/>
            <person name="Duprat S."/>
            <person name="Wincker P."/>
            <person name="Ornston L.N."/>
            <person name="Weissenbach J."/>
            <person name="Marliere P."/>
            <person name="Cohen G.N."/>
            <person name="Medigue C."/>
        </authorList>
    </citation>
    <scope>NUCLEOTIDE SEQUENCE [LARGE SCALE GENOMIC DNA]</scope>
    <source>
        <strain>ATCC 33305 / BD413 / ADP1</strain>
    </source>
</reference>
<protein>
    <recommendedName>
        <fullName evidence="1">Putative pre-16S rRNA nuclease</fullName>
        <ecNumber evidence="1">3.1.-.-</ecNumber>
    </recommendedName>
</protein>
<feature type="chain" id="PRO_0000172007" description="Putative pre-16S rRNA nuclease">
    <location>
        <begin position="1"/>
        <end position="147"/>
    </location>
</feature>
<keyword id="KW-0963">Cytoplasm</keyword>
<keyword id="KW-0378">Hydrolase</keyword>
<keyword id="KW-0540">Nuclease</keyword>
<keyword id="KW-0690">Ribosome biogenesis</keyword>